<organism>
    <name type="scientific">Oryza sativa subsp. japonica</name>
    <name type="common">Rice</name>
    <dbReference type="NCBI Taxonomy" id="39947"/>
    <lineage>
        <taxon>Eukaryota</taxon>
        <taxon>Viridiplantae</taxon>
        <taxon>Streptophyta</taxon>
        <taxon>Embryophyta</taxon>
        <taxon>Tracheophyta</taxon>
        <taxon>Spermatophyta</taxon>
        <taxon>Magnoliopsida</taxon>
        <taxon>Liliopsida</taxon>
        <taxon>Poales</taxon>
        <taxon>Poaceae</taxon>
        <taxon>BOP clade</taxon>
        <taxon>Oryzoideae</taxon>
        <taxon>Oryzeae</taxon>
        <taxon>Oryzinae</taxon>
        <taxon>Oryza</taxon>
        <taxon>Oryza sativa</taxon>
    </lineage>
</organism>
<reference key="1">
    <citation type="journal article" date="2002" name="Nature">
        <title>Sequence and analysis of rice chromosome 4.</title>
        <authorList>
            <person name="Feng Q."/>
            <person name="Zhang Y."/>
            <person name="Hao P."/>
            <person name="Wang S."/>
            <person name="Fu G."/>
            <person name="Huang Y."/>
            <person name="Li Y."/>
            <person name="Zhu J."/>
            <person name="Liu Y."/>
            <person name="Hu X."/>
            <person name="Jia P."/>
            <person name="Zhang Y."/>
            <person name="Zhao Q."/>
            <person name="Ying K."/>
            <person name="Yu S."/>
            <person name="Tang Y."/>
            <person name="Weng Q."/>
            <person name="Zhang L."/>
            <person name="Lu Y."/>
            <person name="Mu J."/>
            <person name="Lu Y."/>
            <person name="Zhang L.S."/>
            <person name="Yu Z."/>
            <person name="Fan D."/>
            <person name="Liu X."/>
            <person name="Lu T."/>
            <person name="Li C."/>
            <person name="Wu Y."/>
            <person name="Sun T."/>
            <person name="Lei H."/>
            <person name="Li T."/>
            <person name="Hu H."/>
            <person name="Guan J."/>
            <person name="Wu M."/>
            <person name="Zhang R."/>
            <person name="Zhou B."/>
            <person name="Chen Z."/>
            <person name="Chen L."/>
            <person name="Jin Z."/>
            <person name="Wang R."/>
            <person name="Yin H."/>
            <person name="Cai Z."/>
            <person name="Ren S."/>
            <person name="Lv G."/>
            <person name="Gu W."/>
            <person name="Zhu G."/>
            <person name="Tu Y."/>
            <person name="Jia J."/>
            <person name="Zhang Y."/>
            <person name="Chen J."/>
            <person name="Kang H."/>
            <person name="Chen X."/>
            <person name="Shao C."/>
            <person name="Sun Y."/>
            <person name="Hu Q."/>
            <person name="Zhang X."/>
            <person name="Zhang W."/>
            <person name="Wang L."/>
            <person name="Ding C."/>
            <person name="Sheng H."/>
            <person name="Gu J."/>
            <person name="Chen S."/>
            <person name="Ni L."/>
            <person name="Zhu F."/>
            <person name="Chen W."/>
            <person name="Lan L."/>
            <person name="Lai Y."/>
            <person name="Cheng Z."/>
            <person name="Gu M."/>
            <person name="Jiang J."/>
            <person name="Li J."/>
            <person name="Hong G."/>
            <person name="Xue Y."/>
            <person name="Han B."/>
        </authorList>
    </citation>
    <scope>NUCLEOTIDE SEQUENCE [LARGE SCALE GENOMIC DNA]</scope>
    <source>
        <strain>cv. Nipponbare</strain>
    </source>
</reference>
<reference key="2">
    <citation type="journal article" date="2005" name="Nature">
        <title>The map-based sequence of the rice genome.</title>
        <authorList>
            <consortium name="International rice genome sequencing project (IRGSP)"/>
        </authorList>
    </citation>
    <scope>NUCLEOTIDE SEQUENCE [LARGE SCALE GENOMIC DNA]</scope>
    <source>
        <strain>cv. Nipponbare</strain>
    </source>
</reference>
<reference key="3">
    <citation type="journal article" date="2008" name="Nucleic Acids Res.">
        <title>The rice annotation project database (RAP-DB): 2008 update.</title>
        <authorList>
            <consortium name="The rice annotation project (RAP)"/>
        </authorList>
    </citation>
    <scope>GENOME REANNOTATION</scope>
    <source>
        <strain>cv. Nipponbare</strain>
    </source>
</reference>
<reference key="4">
    <citation type="journal article" date="2013" name="Rice">
        <title>Improvement of the Oryza sativa Nipponbare reference genome using next generation sequence and optical map data.</title>
        <authorList>
            <person name="Kawahara Y."/>
            <person name="de la Bastide M."/>
            <person name="Hamilton J.P."/>
            <person name="Kanamori H."/>
            <person name="McCombie W.R."/>
            <person name="Ouyang S."/>
            <person name="Schwartz D.C."/>
            <person name="Tanaka T."/>
            <person name="Wu J."/>
            <person name="Zhou S."/>
            <person name="Childs K.L."/>
            <person name="Davidson R.M."/>
            <person name="Lin H."/>
            <person name="Quesada-Ocampo L."/>
            <person name="Vaillancourt B."/>
            <person name="Sakai H."/>
            <person name="Lee S.S."/>
            <person name="Kim J."/>
            <person name="Numa H."/>
            <person name="Itoh T."/>
            <person name="Buell C.R."/>
            <person name="Matsumoto T."/>
        </authorList>
    </citation>
    <scope>GENOME REANNOTATION</scope>
    <source>
        <strain>cv. Nipponbare</strain>
    </source>
</reference>
<reference key="5">
    <citation type="journal article" date="2005" name="PLoS Biol.">
        <title>The genomes of Oryza sativa: a history of duplications.</title>
        <authorList>
            <person name="Yu J."/>
            <person name="Wang J."/>
            <person name="Lin W."/>
            <person name="Li S."/>
            <person name="Li H."/>
            <person name="Zhou J."/>
            <person name="Ni P."/>
            <person name="Dong W."/>
            <person name="Hu S."/>
            <person name="Zeng C."/>
            <person name="Zhang J."/>
            <person name="Zhang Y."/>
            <person name="Li R."/>
            <person name="Xu Z."/>
            <person name="Li S."/>
            <person name="Li X."/>
            <person name="Zheng H."/>
            <person name="Cong L."/>
            <person name="Lin L."/>
            <person name="Yin J."/>
            <person name="Geng J."/>
            <person name="Li G."/>
            <person name="Shi J."/>
            <person name="Liu J."/>
            <person name="Lv H."/>
            <person name="Li J."/>
            <person name="Wang J."/>
            <person name="Deng Y."/>
            <person name="Ran L."/>
            <person name="Shi X."/>
            <person name="Wang X."/>
            <person name="Wu Q."/>
            <person name="Li C."/>
            <person name="Ren X."/>
            <person name="Wang J."/>
            <person name="Wang X."/>
            <person name="Li D."/>
            <person name="Liu D."/>
            <person name="Zhang X."/>
            <person name="Ji Z."/>
            <person name="Zhao W."/>
            <person name="Sun Y."/>
            <person name="Zhang Z."/>
            <person name="Bao J."/>
            <person name="Han Y."/>
            <person name="Dong L."/>
            <person name="Ji J."/>
            <person name="Chen P."/>
            <person name="Wu S."/>
            <person name="Liu J."/>
            <person name="Xiao Y."/>
            <person name="Bu D."/>
            <person name="Tan J."/>
            <person name="Yang L."/>
            <person name="Ye C."/>
            <person name="Zhang J."/>
            <person name="Xu J."/>
            <person name="Zhou Y."/>
            <person name="Yu Y."/>
            <person name="Zhang B."/>
            <person name="Zhuang S."/>
            <person name="Wei H."/>
            <person name="Liu B."/>
            <person name="Lei M."/>
            <person name="Yu H."/>
            <person name="Li Y."/>
            <person name="Xu H."/>
            <person name="Wei S."/>
            <person name="He X."/>
            <person name="Fang L."/>
            <person name="Zhang Z."/>
            <person name="Zhang Y."/>
            <person name="Huang X."/>
            <person name="Su Z."/>
            <person name="Tong W."/>
            <person name="Li J."/>
            <person name="Tong Z."/>
            <person name="Li S."/>
            <person name="Ye J."/>
            <person name="Wang L."/>
            <person name="Fang L."/>
            <person name="Lei T."/>
            <person name="Chen C.-S."/>
            <person name="Chen H.-C."/>
            <person name="Xu Z."/>
            <person name="Li H."/>
            <person name="Huang H."/>
            <person name="Zhang F."/>
            <person name="Xu H."/>
            <person name="Li N."/>
            <person name="Zhao C."/>
            <person name="Li S."/>
            <person name="Dong L."/>
            <person name="Huang Y."/>
            <person name="Li L."/>
            <person name="Xi Y."/>
            <person name="Qi Q."/>
            <person name="Li W."/>
            <person name="Zhang B."/>
            <person name="Hu W."/>
            <person name="Zhang Y."/>
            <person name="Tian X."/>
            <person name="Jiao Y."/>
            <person name="Liang X."/>
            <person name="Jin J."/>
            <person name="Gao L."/>
            <person name="Zheng W."/>
            <person name="Hao B."/>
            <person name="Liu S.-M."/>
            <person name="Wang W."/>
            <person name="Yuan L."/>
            <person name="Cao M."/>
            <person name="McDermott J."/>
            <person name="Samudrala R."/>
            <person name="Wang J."/>
            <person name="Wong G.K.-S."/>
            <person name="Yang H."/>
        </authorList>
    </citation>
    <scope>NUCLEOTIDE SEQUENCE [LARGE SCALE GENOMIC DNA]</scope>
    <source>
        <strain>cv. Nipponbare</strain>
    </source>
</reference>
<reference key="6">
    <citation type="journal article" date="2010" name="Plant Cell">
        <title>Arabidopsis VILLIN1 and VILLIN3 have overlapping and distinct activities in actin bundle formation and turnover.</title>
        <authorList>
            <person name="Khurana P."/>
            <person name="Henty J.L."/>
            <person name="Huang S."/>
            <person name="Staiger A.M."/>
            <person name="Blanchoin L."/>
            <person name="Staiger C.J."/>
        </authorList>
    </citation>
    <scope>GENE FAMILY</scope>
    <scope>NOMENCLATURE</scope>
</reference>
<keyword id="KW-0117">Actin capping</keyword>
<keyword id="KW-0009">Actin-binding</keyword>
<keyword id="KW-0106">Calcium</keyword>
<keyword id="KW-0963">Cytoplasm</keyword>
<keyword id="KW-0206">Cytoskeleton</keyword>
<keyword id="KW-1185">Reference proteome</keyword>
<keyword id="KW-0677">Repeat</keyword>
<evidence type="ECO:0000250" key="1">
    <source>
        <dbReference type="UniProtKB" id="O81644"/>
    </source>
</evidence>
<evidence type="ECO:0000250" key="2">
    <source>
        <dbReference type="UniProtKB" id="Q10L71"/>
    </source>
</evidence>
<evidence type="ECO:0000255" key="3"/>
<evidence type="ECO:0000255" key="4">
    <source>
        <dbReference type="PROSITE-ProRule" id="PRU00595"/>
    </source>
</evidence>
<evidence type="ECO:0000256" key="5">
    <source>
        <dbReference type="SAM" id="MobiDB-lite"/>
    </source>
</evidence>
<evidence type="ECO:0000303" key="6">
    <source>
    </source>
</evidence>
<evidence type="ECO:0000305" key="7"/>
<evidence type="ECO:0000312" key="8">
    <source>
        <dbReference type="EMBL" id="BAF15698.1"/>
    </source>
</evidence>
<evidence type="ECO:0000312" key="9">
    <source>
        <dbReference type="EMBL" id="BAS90870.1"/>
    </source>
</evidence>
<evidence type="ECO:0000312" key="10">
    <source>
        <dbReference type="EMBL" id="CAD41877.2"/>
    </source>
</evidence>
<evidence type="ECO:0000312" key="11">
    <source>
        <dbReference type="EMBL" id="EEE61628.1"/>
    </source>
</evidence>
<accession>Q0JAD9</accession>
<accession>Q7XTQ0</accession>
<feature type="chain" id="PRO_0000438167" description="Villin-4">
    <location>
        <begin position="1"/>
        <end position="946"/>
    </location>
</feature>
<feature type="repeat" description="Gelsolin-like 1" evidence="3">
    <location>
        <begin position="28"/>
        <end position="109"/>
    </location>
</feature>
<feature type="repeat" description="Gelsolin-like 2" evidence="3">
    <location>
        <begin position="152"/>
        <end position="219"/>
    </location>
</feature>
<feature type="repeat" description="Gelsolin-like 3" evidence="3">
    <location>
        <begin position="274"/>
        <end position="339"/>
    </location>
</feature>
<feature type="repeat" description="Gelsolin-like 4" evidence="3">
    <location>
        <begin position="641"/>
        <end position="715"/>
    </location>
</feature>
<feature type="domain" description="HP" evidence="4">
    <location>
        <begin position="881"/>
        <end position="946"/>
    </location>
</feature>
<feature type="region of interest" description="Disordered" evidence="5">
    <location>
        <begin position="744"/>
        <end position="789"/>
    </location>
</feature>
<feature type="region of interest" description="Disordered" evidence="5">
    <location>
        <begin position="801"/>
        <end position="832"/>
    </location>
</feature>
<feature type="region of interest" description="Disordered" evidence="5">
    <location>
        <begin position="844"/>
        <end position="902"/>
    </location>
</feature>
<feature type="compositionally biased region" description="Polar residues" evidence="5">
    <location>
        <begin position="765"/>
        <end position="777"/>
    </location>
</feature>
<feature type="compositionally biased region" description="Acidic residues" evidence="5">
    <location>
        <begin position="874"/>
        <end position="883"/>
    </location>
</feature>
<feature type="sequence conflict" description="In Ref. 1; CAD41877." evidence="7" ref="1">
    <original>ENL</original>
    <variation>GNQ</variation>
    <location>
        <begin position="635"/>
        <end position="637"/>
    </location>
</feature>
<protein>
    <recommendedName>
        <fullName evidence="6">Villin-4</fullName>
    </recommendedName>
</protein>
<sequence>MSISMKDVDPAFRGVGQKDGLEVWRIENFKPVPVPTSSHGKFYMGDSYIILKTTALKNGSFRHDLHYWLGKDTSQDEAGTAAILTVELDAALGGRAVQYREVQGGETEKLLSYFRPCIMPQPGGVASGFNHVEVNQQDHVTRLYVCQGKHVVHVKEVPFVRSSLNHEDIFILDTANKIFQFNGSNSCIQERAKALEVVQYIKDTFHEGKCEVAAVEDGKLMADTEAGEFWGLFGGFAPLPKKTSSEDNGDDKETVTKLLCFNQGTLEHISFESLEHELLETNKCYLLDCGAEMYVWMGRGTSLQVRKGASEAAEKLLIDENRKGSNVIKVIEGFETIMFKSKFNKWPPTPDLKLSSEDGRGKVAALLRSQGLDVKGLMKAAPEEEEPQPYIDCTGHLQVWRVNGDGKTLLSSSDQSKLYTGDCYIFQYTYTGDDKEECLIGTWFGKKSVEEDRTSAISLASKMFQAAKFQAAQARLYEGKEPIQFFVIFQSLQVFKGGLSSGYKNFIAVNGTDDDTYVEGGLALFRIQGSGSENMQAIQVDAVSSSLNSSYCYILHNGNTVFTWTGNLTTSLDNDLVERQLDVIKPDLPSRSQKEGRETDQFWELLGGKCKYSNKKIGKENESDPHLFSCILSKENLKVKEIHHFTQDDLMAEDIFVLDCRTDLFVWVGQEVDAKLRSQAMDIGEKFLLHDFLMENLSQDTPIFIVTEGSEPQFFTRFFTWDSAKSLMHGSSYQRKLAIVKGGATPSLDKPKRRTPAFSGRNAGQDKSQQRTRSMSHSPERHRIRGRSPAFTAIASAFENPSTRYLSTPPPAVKKLFPRSGGSELPKTSSKQSAINALTSAFEGPTKSTIPKSVKASPEAEKAIQEEGSTIGESENEPEDDENSTIYPYERLTTTSDDPAPDIDVTKREVYLSSVEFTEKFGMTRASFKNLPKWKQNRLKSDLQLF</sequence>
<dbReference type="EMBL" id="AL606638">
    <property type="protein sequence ID" value="CAD41877.2"/>
    <property type="molecule type" value="Genomic_DNA"/>
</dbReference>
<dbReference type="EMBL" id="AP008210">
    <property type="protein sequence ID" value="BAF15698.1"/>
    <property type="molecule type" value="Genomic_DNA"/>
</dbReference>
<dbReference type="EMBL" id="AP014960">
    <property type="protein sequence ID" value="BAS90870.1"/>
    <property type="molecule type" value="Genomic_DNA"/>
</dbReference>
<dbReference type="EMBL" id="CM000141">
    <property type="protein sequence ID" value="EEE61628.1"/>
    <property type="molecule type" value="Genomic_DNA"/>
</dbReference>
<dbReference type="RefSeq" id="XP_015635692.1">
    <property type="nucleotide sequence ID" value="XM_015780206.1"/>
</dbReference>
<dbReference type="SMR" id="Q0JAD9"/>
<dbReference type="FunCoup" id="Q0JAD9">
    <property type="interactions" value="1757"/>
</dbReference>
<dbReference type="STRING" id="39947.Q0JAD9"/>
<dbReference type="PaxDb" id="39947-Q0JAD9"/>
<dbReference type="EnsemblPlants" id="Os04t0604000-01">
    <property type="protein sequence ID" value="Os04t0604000-01"/>
    <property type="gene ID" value="Os04g0604000"/>
</dbReference>
<dbReference type="EnsemblPlants" id="Os04t0604000-02">
    <property type="protein sequence ID" value="Os04t0604000-02"/>
    <property type="gene ID" value="Os04g0604000"/>
</dbReference>
<dbReference type="Gramene" id="Os04t0604000-01">
    <property type="protein sequence ID" value="Os04t0604000-01"/>
    <property type="gene ID" value="Os04g0604000"/>
</dbReference>
<dbReference type="Gramene" id="Os04t0604000-02">
    <property type="protein sequence ID" value="Os04t0604000-02"/>
    <property type="gene ID" value="Os04g0604000"/>
</dbReference>
<dbReference type="KEGG" id="dosa:Os04g0604000"/>
<dbReference type="eggNOG" id="KOG0443">
    <property type="taxonomic scope" value="Eukaryota"/>
</dbReference>
<dbReference type="HOGENOM" id="CLU_002568_2_1_1"/>
<dbReference type="InParanoid" id="Q0JAD9"/>
<dbReference type="OMA" id="LIFVWIG"/>
<dbReference type="OrthoDB" id="6375767at2759"/>
<dbReference type="Proteomes" id="UP000000763">
    <property type="component" value="Chromosome 4"/>
</dbReference>
<dbReference type="Proteomes" id="UP000007752">
    <property type="component" value="Chromosome 4"/>
</dbReference>
<dbReference type="Proteomes" id="UP000059680">
    <property type="component" value="Chromosome 4"/>
</dbReference>
<dbReference type="GO" id="GO:0032432">
    <property type="term" value="C:actin filament bundle"/>
    <property type="evidence" value="ECO:0000250"/>
    <property type="project" value="UniProtKB"/>
</dbReference>
<dbReference type="GO" id="GO:0005737">
    <property type="term" value="C:cytoplasm"/>
    <property type="evidence" value="ECO:0007669"/>
    <property type="project" value="UniProtKB-KW"/>
</dbReference>
<dbReference type="GO" id="GO:0051015">
    <property type="term" value="F:actin filament binding"/>
    <property type="evidence" value="ECO:0000250"/>
    <property type="project" value="UniProtKB"/>
</dbReference>
<dbReference type="GO" id="GO:0051693">
    <property type="term" value="P:actin filament capping"/>
    <property type="evidence" value="ECO:0000250"/>
    <property type="project" value="UniProtKB"/>
</dbReference>
<dbReference type="GO" id="GO:0007015">
    <property type="term" value="P:actin filament organization"/>
    <property type="evidence" value="ECO:0000250"/>
    <property type="project" value="UniProtKB"/>
</dbReference>
<dbReference type="GO" id="GO:0051014">
    <property type="term" value="P:actin filament severing"/>
    <property type="evidence" value="ECO:0000250"/>
    <property type="project" value="UniProtKB"/>
</dbReference>
<dbReference type="CDD" id="cd11290">
    <property type="entry name" value="gelsolin_S1_like"/>
    <property type="match status" value="1"/>
</dbReference>
<dbReference type="CDD" id="cd11289">
    <property type="entry name" value="gelsolin_S2_like"/>
    <property type="match status" value="1"/>
</dbReference>
<dbReference type="CDD" id="cd11293">
    <property type="entry name" value="gelsolin_S4_like"/>
    <property type="match status" value="1"/>
</dbReference>
<dbReference type="CDD" id="cd11288">
    <property type="entry name" value="gelsolin_S5_like"/>
    <property type="match status" value="1"/>
</dbReference>
<dbReference type="FunFam" id="3.40.20.10:FF:000001">
    <property type="entry name" value="Gelsolin"/>
    <property type="match status" value="1"/>
</dbReference>
<dbReference type="FunFam" id="3.40.20.10:FF:000002">
    <property type="entry name" value="Gelsolin"/>
    <property type="match status" value="1"/>
</dbReference>
<dbReference type="FunFam" id="3.40.20.10:FF:000033">
    <property type="entry name" value="Villin-4"/>
    <property type="match status" value="1"/>
</dbReference>
<dbReference type="FunFam" id="3.40.20.10:FF:000039">
    <property type="entry name" value="Villin-4"/>
    <property type="match status" value="1"/>
</dbReference>
<dbReference type="FunFam" id="1.10.950.10:FF:000004">
    <property type="entry name" value="Villin-like 1"/>
    <property type="match status" value="1"/>
</dbReference>
<dbReference type="FunFam" id="3.40.20.10:FF:000028">
    <property type="entry name" value="Villin-like 1"/>
    <property type="match status" value="1"/>
</dbReference>
<dbReference type="FunFam" id="3.40.20.10:FF:000038">
    <property type="entry name" value="Villin-like 1"/>
    <property type="match status" value="1"/>
</dbReference>
<dbReference type="Gene3D" id="3.40.20.10">
    <property type="entry name" value="Severin"/>
    <property type="match status" value="6"/>
</dbReference>
<dbReference type="Gene3D" id="1.10.950.10">
    <property type="entry name" value="Villin headpiece domain"/>
    <property type="match status" value="1"/>
</dbReference>
<dbReference type="InterPro" id="IPR029006">
    <property type="entry name" value="ADF-H/Gelsolin-like_dom_sf"/>
</dbReference>
<dbReference type="InterPro" id="IPR007123">
    <property type="entry name" value="Gelsolin-like_dom"/>
</dbReference>
<dbReference type="InterPro" id="IPR036180">
    <property type="entry name" value="Gelsolin-like_dom_sf"/>
</dbReference>
<dbReference type="InterPro" id="IPR007122">
    <property type="entry name" value="Villin/Gelsolin"/>
</dbReference>
<dbReference type="InterPro" id="IPR003128">
    <property type="entry name" value="Villin_headpiece"/>
</dbReference>
<dbReference type="InterPro" id="IPR036886">
    <property type="entry name" value="Villin_headpiece_dom_sf"/>
</dbReference>
<dbReference type="PANTHER" id="PTHR11977">
    <property type="entry name" value="VILLIN"/>
    <property type="match status" value="1"/>
</dbReference>
<dbReference type="PANTHER" id="PTHR11977:SF49">
    <property type="entry name" value="VILLIN-4"/>
    <property type="match status" value="1"/>
</dbReference>
<dbReference type="Pfam" id="PF00626">
    <property type="entry name" value="Gelsolin"/>
    <property type="match status" value="4"/>
</dbReference>
<dbReference type="Pfam" id="PF02209">
    <property type="entry name" value="VHP"/>
    <property type="match status" value="1"/>
</dbReference>
<dbReference type="PRINTS" id="PR00597">
    <property type="entry name" value="GELSOLIN"/>
</dbReference>
<dbReference type="SMART" id="SM00262">
    <property type="entry name" value="GEL"/>
    <property type="match status" value="6"/>
</dbReference>
<dbReference type="SMART" id="SM00153">
    <property type="entry name" value="VHP"/>
    <property type="match status" value="1"/>
</dbReference>
<dbReference type="SUPFAM" id="SSF55753">
    <property type="entry name" value="Actin depolymerizing proteins"/>
    <property type="match status" value="4"/>
</dbReference>
<dbReference type="SUPFAM" id="SSF82754">
    <property type="entry name" value="C-terminal, gelsolin-like domain of Sec23/24"/>
    <property type="match status" value="2"/>
</dbReference>
<dbReference type="SUPFAM" id="SSF47050">
    <property type="entry name" value="VHP, Villin headpiece domain"/>
    <property type="match status" value="1"/>
</dbReference>
<dbReference type="PROSITE" id="PS51089">
    <property type="entry name" value="HP"/>
    <property type="match status" value="1"/>
</dbReference>
<proteinExistence type="inferred from homology"/>
<gene>
    <name evidence="6" type="primary">VLN4</name>
    <name evidence="7" type="ordered locus">LOC_Os04g51440</name>
    <name evidence="8" type="ordered locus">Os04g0604000</name>
    <name evidence="11" type="ORF">OsJ_16056</name>
    <name evidence="10" type="ORF">OSJNBa0041A02.24</name>
    <name evidence="9" type="ORF">OSNPB_040604000</name>
</gene>
<comment type="function">
    <text evidence="1 2">Ca(2+)-regulated actin-binding protein (By similarity). Binds actin microfilaments (MFs). Involved in actin filament bundling, severing and capping. Caps the barbed end of actin filaments and is able to sever them in a calcium-dependent manner (By similarity).</text>
</comment>
<comment type="subcellular location">
    <subcellularLocation>
        <location evidence="1">Cytoplasm</location>
        <location evidence="1">Cytoskeleton</location>
    </subcellularLocation>
</comment>
<comment type="similarity">
    <text evidence="7">Belongs to the villin/gelsolin family.</text>
</comment>
<name>VLN4_ORYSJ</name>